<evidence type="ECO:0000255" key="1">
    <source>
        <dbReference type="HAMAP-Rule" id="MF_00741"/>
    </source>
</evidence>
<accession>A5UEU3</accession>
<feature type="chain" id="PRO_1000046439" description="Phosphoribosylformylglycinamidine cyclo-ligase">
    <location>
        <begin position="1"/>
        <end position="344"/>
    </location>
</feature>
<keyword id="KW-0067">ATP-binding</keyword>
<keyword id="KW-0963">Cytoplasm</keyword>
<keyword id="KW-0436">Ligase</keyword>
<keyword id="KW-0547">Nucleotide-binding</keyword>
<keyword id="KW-0658">Purine biosynthesis</keyword>
<organism>
    <name type="scientific">Haemophilus influenzae (strain PittGG)</name>
    <dbReference type="NCBI Taxonomy" id="374931"/>
    <lineage>
        <taxon>Bacteria</taxon>
        <taxon>Pseudomonadati</taxon>
        <taxon>Pseudomonadota</taxon>
        <taxon>Gammaproteobacteria</taxon>
        <taxon>Pasteurellales</taxon>
        <taxon>Pasteurellaceae</taxon>
        <taxon>Haemophilus</taxon>
    </lineage>
</organism>
<reference key="1">
    <citation type="journal article" date="2007" name="Genome Biol.">
        <title>Characterization and modeling of the Haemophilus influenzae core and supragenomes based on the complete genomic sequences of Rd and 12 clinical nontypeable strains.</title>
        <authorList>
            <person name="Hogg J.S."/>
            <person name="Hu F.Z."/>
            <person name="Janto B."/>
            <person name="Boissy R."/>
            <person name="Hayes J."/>
            <person name="Keefe R."/>
            <person name="Post J.C."/>
            <person name="Ehrlich G.D."/>
        </authorList>
    </citation>
    <scope>NUCLEOTIDE SEQUENCE [LARGE SCALE GENOMIC DNA]</scope>
    <source>
        <strain>PittGG</strain>
    </source>
</reference>
<protein>
    <recommendedName>
        <fullName evidence="1">Phosphoribosylformylglycinamidine cyclo-ligase</fullName>
        <ecNumber evidence="1">6.3.3.1</ecNumber>
    </recommendedName>
    <alternativeName>
        <fullName evidence="1">AIR synthase</fullName>
    </alternativeName>
    <alternativeName>
        <fullName evidence="1">AIRS</fullName>
    </alternativeName>
    <alternativeName>
        <fullName evidence="1">Phosphoribosyl-aminoimidazole synthetase</fullName>
    </alternativeName>
</protein>
<dbReference type="EC" id="6.3.3.1" evidence="1"/>
<dbReference type="EMBL" id="CP000672">
    <property type="protein sequence ID" value="ABQ99298.1"/>
    <property type="molecule type" value="Genomic_DNA"/>
</dbReference>
<dbReference type="SMR" id="A5UEU3"/>
<dbReference type="KEGG" id="hiq:CGSHiGG_01015"/>
<dbReference type="HOGENOM" id="CLU_047116_0_0_6"/>
<dbReference type="UniPathway" id="UPA00074">
    <property type="reaction ID" value="UER00129"/>
</dbReference>
<dbReference type="Proteomes" id="UP000001990">
    <property type="component" value="Chromosome"/>
</dbReference>
<dbReference type="GO" id="GO:0005829">
    <property type="term" value="C:cytosol"/>
    <property type="evidence" value="ECO:0007669"/>
    <property type="project" value="TreeGrafter"/>
</dbReference>
<dbReference type="GO" id="GO:0005524">
    <property type="term" value="F:ATP binding"/>
    <property type="evidence" value="ECO:0007669"/>
    <property type="project" value="UniProtKB-KW"/>
</dbReference>
<dbReference type="GO" id="GO:0004637">
    <property type="term" value="F:phosphoribosylamine-glycine ligase activity"/>
    <property type="evidence" value="ECO:0007669"/>
    <property type="project" value="TreeGrafter"/>
</dbReference>
<dbReference type="GO" id="GO:0004641">
    <property type="term" value="F:phosphoribosylformylglycinamidine cyclo-ligase activity"/>
    <property type="evidence" value="ECO:0007669"/>
    <property type="project" value="UniProtKB-UniRule"/>
</dbReference>
<dbReference type="GO" id="GO:0006189">
    <property type="term" value="P:'de novo' IMP biosynthetic process"/>
    <property type="evidence" value="ECO:0007669"/>
    <property type="project" value="UniProtKB-UniRule"/>
</dbReference>
<dbReference type="GO" id="GO:0046084">
    <property type="term" value="P:adenine biosynthetic process"/>
    <property type="evidence" value="ECO:0007669"/>
    <property type="project" value="TreeGrafter"/>
</dbReference>
<dbReference type="CDD" id="cd02196">
    <property type="entry name" value="PurM"/>
    <property type="match status" value="1"/>
</dbReference>
<dbReference type="FunFam" id="3.30.1330.10:FF:000001">
    <property type="entry name" value="Phosphoribosylformylglycinamidine cyclo-ligase"/>
    <property type="match status" value="1"/>
</dbReference>
<dbReference type="FunFam" id="3.90.650.10:FF:000001">
    <property type="entry name" value="Phosphoribosylformylglycinamidine cyclo-ligase"/>
    <property type="match status" value="1"/>
</dbReference>
<dbReference type="Gene3D" id="3.90.650.10">
    <property type="entry name" value="PurM-like C-terminal domain"/>
    <property type="match status" value="1"/>
</dbReference>
<dbReference type="Gene3D" id="3.30.1330.10">
    <property type="entry name" value="PurM-like, N-terminal domain"/>
    <property type="match status" value="1"/>
</dbReference>
<dbReference type="HAMAP" id="MF_00741">
    <property type="entry name" value="AIRS"/>
    <property type="match status" value="1"/>
</dbReference>
<dbReference type="InterPro" id="IPR010918">
    <property type="entry name" value="PurM-like_C_dom"/>
</dbReference>
<dbReference type="InterPro" id="IPR036676">
    <property type="entry name" value="PurM-like_C_sf"/>
</dbReference>
<dbReference type="InterPro" id="IPR016188">
    <property type="entry name" value="PurM-like_N"/>
</dbReference>
<dbReference type="InterPro" id="IPR036921">
    <property type="entry name" value="PurM-like_N_sf"/>
</dbReference>
<dbReference type="InterPro" id="IPR004733">
    <property type="entry name" value="PurM_cligase"/>
</dbReference>
<dbReference type="NCBIfam" id="TIGR00878">
    <property type="entry name" value="purM"/>
    <property type="match status" value="1"/>
</dbReference>
<dbReference type="PANTHER" id="PTHR10520:SF12">
    <property type="entry name" value="TRIFUNCTIONAL PURINE BIOSYNTHETIC PROTEIN ADENOSINE-3"/>
    <property type="match status" value="1"/>
</dbReference>
<dbReference type="PANTHER" id="PTHR10520">
    <property type="entry name" value="TRIFUNCTIONAL PURINE BIOSYNTHETIC PROTEIN ADENOSINE-3-RELATED"/>
    <property type="match status" value="1"/>
</dbReference>
<dbReference type="Pfam" id="PF00586">
    <property type="entry name" value="AIRS"/>
    <property type="match status" value="1"/>
</dbReference>
<dbReference type="Pfam" id="PF02769">
    <property type="entry name" value="AIRS_C"/>
    <property type="match status" value="1"/>
</dbReference>
<dbReference type="SUPFAM" id="SSF56042">
    <property type="entry name" value="PurM C-terminal domain-like"/>
    <property type="match status" value="1"/>
</dbReference>
<dbReference type="SUPFAM" id="SSF55326">
    <property type="entry name" value="PurM N-terminal domain-like"/>
    <property type="match status" value="1"/>
</dbReference>
<name>PUR5_HAEIG</name>
<sequence>MSNTQLSYKDAGVDIHAGNELVERIKGDVKRTRRSEVMGGLGGFGALCALPTKYKEPILVSGTDGVGTKLRLAIDLKKHDTIGQDLVAMCVNDLIVQGAEPLFFLDYYATGKLDVDVAASVIKGIADGCEMSGCALVGGETAEMPGMYHEGDYDLAGFCVGVVEKSEIIDGTAVKTGDTLIALGSSGAHSNGYSLIRKVLEVSGANPTDLLEGKPLSEHFLAPTKIYVKSILQLIKQTEVHAIAHLTGGGFWENIPRVLPDNTKAVIDESSWQWPAIFNWLQEKGNISRYEMYRTFNCGVGMVIALPEKEVETALALLEQSGEKAWVIGKIEHLGEGEAQVEIQ</sequence>
<comment type="catalytic activity">
    <reaction evidence="1">
        <text>2-formamido-N(1)-(5-O-phospho-beta-D-ribosyl)acetamidine + ATP = 5-amino-1-(5-phospho-beta-D-ribosyl)imidazole + ADP + phosphate + H(+)</text>
        <dbReference type="Rhea" id="RHEA:23032"/>
        <dbReference type="ChEBI" id="CHEBI:15378"/>
        <dbReference type="ChEBI" id="CHEBI:30616"/>
        <dbReference type="ChEBI" id="CHEBI:43474"/>
        <dbReference type="ChEBI" id="CHEBI:137981"/>
        <dbReference type="ChEBI" id="CHEBI:147287"/>
        <dbReference type="ChEBI" id="CHEBI:456216"/>
        <dbReference type="EC" id="6.3.3.1"/>
    </reaction>
</comment>
<comment type="pathway">
    <text evidence="1">Purine metabolism; IMP biosynthesis via de novo pathway; 5-amino-1-(5-phospho-D-ribosyl)imidazole from N(2)-formyl-N(1)-(5-phospho-D-ribosyl)glycinamide: step 2/2.</text>
</comment>
<comment type="subcellular location">
    <subcellularLocation>
        <location evidence="1">Cytoplasm</location>
    </subcellularLocation>
</comment>
<comment type="similarity">
    <text evidence="1">Belongs to the AIR synthase family.</text>
</comment>
<gene>
    <name evidence="1" type="primary">purM</name>
    <name type="ordered locus">CGSHiGG_01015</name>
</gene>
<proteinExistence type="inferred from homology"/>